<organism>
    <name type="scientific">Escherichia phage lambda</name>
    <name type="common">Bacteriophage lambda</name>
    <dbReference type="NCBI Taxonomy" id="2681611"/>
    <lineage>
        <taxon>Viruses</taxon>
        <taxon>Duplodnaviria</taxon>
        <taxon>Heunggongvirae</taxon>
        <taxon>Uroviricota</taxon>
        <taxon>Caudoviricetes</taxon>
        <taxon>Lambdavirus</taxon>
        <taxon>Lambdavirus lambda</taxon>
    </lineage>
</organism>
<feature type="chain" id="PRO_0000077592" description="Transcriptional activator II">
    <location>
        <begin position="1"/>
        <end position="97"/>
    </location>
</feature>
<feature type="DNA-binding region" description="H-T-H motif" evidence="1">
    <location>
        <begin position="26"/>
        <end position="45"/>
    </location>
</feature>
<feature type="helix" evidence="7">
    <location>
        <begin position="6"/>
        <end position="24"/>
    </location>
</feature>
<feature type="helix" evidence="7">
    <location>
        <begin position="26"/>
        <end position="33"/>
    </location>
</feature>
<feature type="helix" evidence="7">
    <location>
        <begin position="37"/>
        <end position="46"/>
    </location>
</feature>
<feature type="helix" evidence="7">
    <location>
        <begin position="48"/>
        <end position="58"/>
    </location>
</feature>
<feature type="helix" evidence="7">
    <location>
        <begin position="64"/>
        <end position="77"/>
    </location>
</feature>
<accession>P03042</accession>
<proteinExistence type="evidence at protein level"/>
<organismHost>
    <name type="scientific">Escherichia coli</name>
    <dbReference type="NCBI Taxonomy" id="562"/>
</organismHost>
<reference key="1">
    <citation type="journal article" date="1982" name="J. Mol. Biol.">
        <title>Nucleotide sequence of bacteriophage lambda DNA.</title>
        <authorList>
            <person name="Sanger F."/>
            <person name="Coulson A.R."/>
            <person name="Hong G.F."/>
            <person name="Hill D.F."/>
            <person name="Petersen G.B."/>
        </authorList>
    </citation>
    <scope>NUCLEOTIDE SEQUENCE [LARGE SCALE GENOMIC DNA]</scope>
</reference>
<reference key="2">
    <citation type="journal article" date="1978" name="Nature">
        <title>Nucleotide sequence of cro, cII and part of the O gene in phage lambda DNA.</title>
        <authorList>
            <person name="Schwarz E."/>
            <person name="Scherer G."/>
            <person name="Hobom G."/>
            <person name="Koessel H."/>
        </authorList>
    </citation>
    <scope>NUCLEOTIDE SEQUENCE [GENOMIC DNA]</scope>
    <source>
        <strain>DVH93</strain>
    </source>
</reference>
<reference key="3">
    <citation type="journal article" date="1979" name="Gene">
        <title>Primary structure of an EcoRI fragment of lambda imm434 DNA containing regions cI-cro of phage 434 and cII-o of phage lambda.</title>
        <authorList>
            <person name="Ovchinnikov Y.A."/>
            <person name="Guryev S.O."/>
            <person name="Krayev A.S."/>
            <person name="Monastyrskaya G.S."/>
            <person name="Skryabin K.G."/>
            <person name="Sverdlov E.D."/>
            <person name="Zakharyev V.M."/>
            <person name="Bayev A.A."/>
        </authorList>
    </citation>
    <scope>NUCLEOTIDE SEQUENCE [GENOMIC DNA]</scope>
    <source>
        <strain>IMM434</strain>
    </source>
</reference>
<reference key="4">
    <citation type="journal article" date="1982" name="Gene">
        <title>Probing cII and himA action at the integrase promoter pi of bacteriophage lambda.</title>
        <authorList>
            <person name="Benedik M."/>
            <person name="Mascarenhas D."/>
            <person name="Campbell A."/>
        </authorList>
    </citation>
    <scope>FUNCTION</scope>
</reference>
<reference key="5">
    <citation type="journal article" date="1985" name="Proc. Natl. Acad. Sci. U.S.A.">
        <title>A cII-dependent promoter is located within the Q gene of bacteriophage lambda.</title>
        <authorList>
            <person name="Hoopes B.C."/>
            <person name="McClure W.R."/>
        </authorList>
    </citation>
    <scope>FUNCTION</scope>
</reference>
<reference key="6">
    <citation type="journal article" date="1997" name="Mol. Microbiol.">
        <title>Proteolysis of the phage lambda CII regulatory protein by FtsH (HflB) of Escherichia coli.</title>
        <authorList>
            <person name="Shotland Y."/>
            <person name="Koby S."/>
            <person name="Teff D."/>
            <person name="Mansur N."/>
            <person name="Oren D.A."/>
            <person name="Tatematsu K."/>
            <person name="Tomoyasu T."/>
            <person name="Kessel M."/>
            <person name="Bukau B."/>
            <person name="Ogura T."/>
            <person name="Oppenheim A.B."/>
        </authorList>
    </citation>
    <scope>FUNCTION</scope>
</reference>
<reference key="7">
    <citation type="journal article" date="2010" name="Arch. Biochem. Biophys.">
        <title>HflD, an Escherichia coli protein involved in the lambda lysis-lysogeny switch, impairs transcription activation by lambdaCII.</title>
        <authorList>
            <person name="Parua P.K."/>
            <person name="Mondal A."/>
            <person name="Parrack P."/>
        </authorList>
    </citation>
    <scope>FUNCTION</scope>
</reference>
<reference key="8">
    <citation type="journal article" date="2005" name="Proc. Natl. Acad. Sci. U.S.A.">
        <title>Structure of lambda CII: implications for recognition of direct-repeat DNA by an unusual tetrameric organization.</title>
        <authorList>
            <person name="Datta A.B."/>
            <person name="Panjikar S."/>
            <person name="Weiss M.S."/>
            <person name="Chakrabarti P."/>
            <person name="Parrack P."/>
        </authorList>
    </citation>
    <scope>X-RAY CRYSTALLOGRAPHY (2.56 ANGSTROMS)</scope>
</reference>
<reference key="9">
    <citation type="journal article" date="2005" name="Mol. Cell">
        <title>Crystal structure of bacteriophage lambda cII and its DNA complex.</title>
        <authorList>
            <person name="Jain D."/>
            <person name="Kim Y."/>
            <person name="Maxwell K.L."/>
            <person name="Beasley S."/>
            <person name="Zhang R."/>
            <person name="Gussin G.N."/>
            <person name="Edwards A.M."/>
            <person name="Darst S.A."/>
        </authorList>
    </citation>
    <scope>X-RAY CRYSTALLOGRAPHY (2.8 ANGSTROMS)</scope>
</reference>
<evidence type="ECO:0000255" key="1"/>
<evidence type="ECO:0000269" key="2">
    <source>
    </source>
</evidence>
<evidence type="ECO:0000269" key="3">
    <source>
    </source>
</evidence>
<evidence type="ECO:0000269" key="4">
    <source>
    </source>
</evidence>
<evidence type="ECO:0000269" key="5">
    <source>
    </source>
</evidence>
<evidence type="ECO:0000305" key="6"/>
<evidence type="ECO:0007829" key="7">
    <source>
        <dbReference type="PDB" id="1ZS4"/>
    </source>
</evidence>
<gene>
    <name type="primary">cII</name>
    <name type="ordered locus">lambdap59</name>
</gene>
<comment type="function">
    <text evidence="2 3 4 5">Acts as a transcriptional activator that allows virus to initiate a latent state. Following infection, participates, together with cIII, in activation of the Pe and Pi promoters, which are responsible for the transcription of the cI (repressor) and int (integrase) genes, respectively. Both of these gene products are required for the establishment of latency.</text>
</comment>
<comment type="subunit">
    <text>Homotetramer. Interacts with cIII; this interaction is essential to stabilize cII that would otherwise be quickly degraded by host protease FtsH.</text>
</comment>
<comment type="interaction">
    <interactant intactId="EBI-4478343">
        <id>P03042</id>
    </interactant>
    <interactant intactId="EBI-548381">
        <id>P0AAI3</id>
        <label>ftsH</label>
    </interactant>
    <organismsDiffer>true</organismsDiffer>
    <experiments>5</experiments>
</comment>
<comment type="miscellaneous">
    <text>Lambda-imm434 is a hybrid of bacteriophages 434 and lambda. The cII protein coding region is in the lambda portion of the imm434 genome.</text>
</comment>
<comment type="similarity">
    <text evidence="6">Belongs to the lambda phage cII protein family.</text>
</comment>
<sequence length="97" mass="11056">MVRANKRNEALRIESALLNKIAMLGTEKTAEAVGVDKSQISRWKRDWIPKFSMLLAVLEWGVVDDDMARLARQVAAILTNKKRPAATERSEQIQMEF</sequence>
<protein>
    <recommendedName>
        <fullName>Transcriptional activator II</fullName>
    </recommendedName>
</protein>
<keyword id="KW-0002">3D-structure</keyword>
<keyword id="KW-0010">Activator</keyword>
<keyword id="KW-0238">DNA-binding</keyword>
<keyword id="KW-0244">Early protein</keyword>
<keyword id="KW-1185">Reference proteome</keyword>
<keyword id="KW-0804">Transcription</keyword>
<keyword id="KW-0805">Transcription regulation</keyword>
<keyword id="KW-1251">Viral latency</keyword>
<keyword id="KW-1276">Viral latency initiation and maintenance</keyword>
<name>RPC2_LAMBD</name>
<dbReference type="EMBL" id="J02460">
    <property type="protein sequence ID" value="AAA32246.1"/>
    <property type="molecule type" value="Genomic_DNA"/>
</dbReference>
<dbReference type="EMBL" id="J02459">
    <property type="protein sequence ID" value="AAA96583.1"/>
    <property type="molecule type" value="Genomic_DNA"/>
</dbReference>
<dbReference type="PIR" id="A03579">
    <property type="entry name" value="QCBP2L"/>
</dbReference>
<dbReference type="RefSeq" id="NP_040630.1">
    <property type="nucleotide sequence ID" value="NC_001416.1"/>
</dbReference>
<dbReference type="PDB" id="1XWR">
    <property type="method" value="X-ray"/>
    <property type="resolution" value="2.56 A"/>
    <property type="chains" value="A/B/C/D=1-97"/>
</dbReference>
<dbReference type="PDB" id="1ZPQ">
    <property type="method" value="X-ray"/>
    <property type="resolution" value="2.80 A"/>
    <property type="chains" value="A/B/C/D=1-97"/>
</dbReference>
<dbReference type="PDB" id="1ZS4">
    <property type="method" value="X-ray"/>
    <property type="resolution" value="1.70 A"/>
    <property type="chains" value="A/B/C/D=4-82"/>
</dbReference>
<dbReference type="PDB" id="8IGR">
    <property type="method" value="EM"/>
    <property type="resolution" value="3.10 A"/>
    <property type="chains" value="A/B/C/D=1-97"/>
</dbReference>
<dbReference type="PDBsum" id="1XWR"/>
<dbReference type="PDBsum" id="1ZPQ"/>
<dbReference type="PDBsum" id="1ZS4"/>
<dbReference type="PDBsum" id="8IGR"/>
<dbReference type="EMDB" id="EMD-35438"/>
<dbReference type="SMR" id="P03042"/>
<dbReference type="IntAct" id="P03042">
    <property type="interactions" value="3"/>
</dbReference>
<dbReference type="GeneID" id="2703494"/>
<dbReference type="KEGG" id="vg:2703494"/>
<dbReference type="EvolutionaryTrace" id="P03042"/>
<dbReference type="Proteomes" id="UP000001711">
    <property type="component" value="Genome"/>
</dbReference>
<dbReference type="GO" id="GO:0003677">
    <property type="term" value="F:DNA binding"/>
    <property type="evidence" value="ECO:0007669"/>
    <property type="project" value="UniProtKB-KW"/>
</dbReference>
<dbReference type="GO" id="GO:0006355">
    <property type="term" value="P:regulation of DNA-templated transcription"/>
    <property type="evidence" value="ECO:0007669"/>
    <property type="project" value="InterPro"/>
</dbReference>
<dbReference type="GO" id="GO:0019042">
    <property type="term" value="P:viral latency"/>
    <property type="evidence" value="ECO:0007669"/>
    <property type="project" value="UniProtKB-KW"/>
</dbReference>
<dbReference type="Gene3D" id="1.10.260.40">
    <property type="entry name" value="lambda repressor-like DNA-binding domains"/>
    <property type="match status" value="1"/>
</dbReference>
<dbReference type="InterPro" id="IPR010982">
    <property type="entry name" value="Lambda_DNA-bd_dom_sf"/>
</dbReference>
<dbReference type="InterPro" id="IPR007933">
    <property type="entry name" value="Transcrpt_activ_CII"/>
</dbReference>
<dbReference type="Pfam" id="PF05269">
    <property type="entry name" value="Phage_CII"/>
    <property type="match status" value="1"/>
</dbReference>
<dbReference type="SUPFAM" id="SSF47413">
    <property type="entry name" value="lambda repressor-like DNA-binding domains"/>
    <property type="match status" value="1"/>
</dbReference>